<protein>
    <recommendedName>
        <fullName>Peroxisome assembly protein 22</fullName>
    </recommendedName>
    <alternativeName>
        <fullName>Peroxin-22</fullName>
    </alternativeName>
</protein>
<feature type="chain" id="PRO_0000058337" description="Peroxisome assembly protein 22">
    <location>
        <begin position="1"/>
        <end position="156"/>
    </location>
</feature>
<feature type="transmembrane region" description="Helical" evidence="2">
    <location>
        <begin position="24"/>
        <end position="46"/>
    </location>
</feature>
<reference key="1">
    <citation type="journal article" date="2004" name="Nature">
        <title>Genome evolution in yeasts.</title>
        <authorList>
            <person name="Dujon B."/>
            <person name="Sherman D."/>
            <person name="Fischer G."/>
            <person name="Durrens P."/>
            <person name="Casaregola S."/>
            <person name="Lafontaine I."/>
            <person name="de Montigny J."/>
            <person name="Marck C."/>
            <person name="Neuveglise C."/>
            <person name="Talla E."/>
            <person name="Goffard N."/>
            <person name="Frangeul L."/>
            <person name="Aigle M."/>
            <person name="Anthouard V."/>
            <person name="Babour A."/>
            <person name="Barbe V."/>
            <person name="Barnay S."/>
            <person name="Blanchin S."/>
            <person name="Beckerich J.-M."/>
            <person name="Beyne E."/>
            <person name="Bleykasten C."/>
            <person name="Boisrame A."/>
            <person name="Boyer J."/>
            <person name="Cattolico L."/>
            <person name="Confanioleri F."/>
            <person name="de Daruvar A."/>
            <person name="Despons L."/>
            <person name="Fabre E."/>
            <person name="Fairhead C."/>
            <person name="Ferry-Dumazet H."/>
            <person name="Groppi A."/>
            <person name="Hantraye F."/>
            <person name="Hennequin C."/>
            <person name="Jauniaux N."/>
            <person name="Joyet P."/>
            <person name="Kachouri R."/>
            <person name="Kerrest A."/>
            <person name="Koszul R."/>
            <person name="Lemaire M."/>
            <person name="Lesur I."/>
            <person name="Ma L."/>
            <person name="Muller H."/>
            <person name="Nicaud J.-M."/>
            <person name="Nikolski M."/>
            <person name="Oztas S."/>
            <person name="Ozier-Kalogeropoulos O."/>
            <person name="Pellenz S."/>
            <person name="Potier S."/>
            <person name="Richard G.-F."/>
            <person name="Straub M.-L."/>
            <person name="Suleau A."/>
            <person name="Swennen D."/>
            <person name="Tekaia F."/>
            <person name="Wesolowski-Louvel M."/>
            <person name="Westhof E."/>
            <person name="Wirth B."/>
            <person name="Zeniou-Meyer M."/>
            <person name="Zivanovic Y."/>
            <person name="Bolotin-Fukuhara M."/>
            <person name="Thierry A."/>
            <person name="Bouchier C."/>
            <person name="Caudron B."/>
            <person name="Scarpelli C."/>
            <person name="Gaillardin C."/>
            <person name="Weissenbach J."/>
            <person name="Wincker P."/>
            <person name="Souciet J.-L."/>
        </authorList>
    </citation>
    <scope>NUCLEOTIDE SEQUENCE [LARGE SCALE GENOMIC DNA]</scope>
    <source>
        <strain>ATCC 8585 / CBS 2359 / DSM 70799 / NBRC 1267 / NRRL Y-1140 / WM37</strain>
    </source>
</reference>
<organism>
    <name type="scientific">Kluyveromyces lactis (strain ATCC 8585 / CBS 2359 / DSM 70799 / NBRC 1267 / NRRL Y-1140 / WM37)</name>
    <name type="common">Yeast</name>
    <name type="synonym">Candida sphaerica</name>
    <dbReference type="NCBI Taxonomy" id="284590"/>
    <lineage>
        <taxon>Eukaryota</taxon>
        <taxon>Fungi</taxon>
        <taxon>Dikarya</taxon>
        <taxon>Ascomycota</taxon>
        <taxon>Saccharomycotina</taxon>
        <taxon>Saccharomycetes</taxon>
        <taxon>Saccharomycetales</taxon>
        <taxon>Saccharomycetaceae</taxon>
        <taxon>Kluyveromyces</taxon>
    </lineage>
</organism>
<dbReference type="EMBL" id="CR382126">
    <property type="protein sequence ID" value="CAG97800.1"/>
    <property type="molecule type" value="Genomic_DNA"/>
</dbReference>
<dbReference type="RefSeq" id="XP_455093.1">
    <property type="nucleotide sequence ID" value="XM_455093.1"/>
</dbReference>
<dbReference type="SMR" id="Q6CLU6"/>
<dbReference type="FunCoup" id="Q6CLU6">
    <property type="interactions" value="27"/>
</dbReference>
<dbReference type="PaxDb" id="284590-Q6CLU6"/>
<dbReference type="KEGG" id="kla:KLLA0_F00308g"/>
<dbReference type="eggNOG" id="ENOG502SFA5">
    <property type="taxonomic scope" value="Eukaryota"/>
</dbReference>
<dbReference type="HOGENOM" id="CLU_1686888_0_0_1"/>
<dbReference type="InParanoid" id="Q6CLU6"/>
<dbReference type="OMA" id="LEDSIWP"/>
<dbReference type="Proteomes" id="UP000000598">
    <property type="component" value="Chromosome F"/>
</dbReference>
<dbReference type="GO" id="GO:0005778">
    <property type="term" value="C:peroxisomal membrane"/>
    <property type="evidence" value="ECO:0007669"/>
    <property type="project" value="UniProtKB-SubCell"/>
</dbReference>
<dbReference type="GO" id="GO:0007031">
    <property type="term" value="P:peroxisome organization"/>
    <property type="evidence" value="ECO:0007669"/>
    <property type="project" value="UniProtKB-KW"/>
</dbReference>
<dbReference type="Gene3D" id="3.40.50.11730">
    <property type="entry name" value="Peroxisome assembly protein 22"/>
    <property type="match status" value="1"/>
</dbReference>
<dbReference type="InterPro" id="IPR024359">
    <property type="entry name" value="Peroxin-22"/>
</dbReference>
<dbReference type="InterPro" id="IPR038613">
    <property type="entry name" value="Peroxin-22_C_sf"/>
</dbReference>
<dbReference type="Pfam" id="PF12827">
    <property type="entry name" value="Peroxin-22"/>
    <property type="match status" value="1"/>
</dbReference>
<accession>Q6CLU6</accession>
<evidence type="ECO:0000250" key="1"/>
<evidence type="ECO:0000255" key="2"/>
<evidence type="ECO:0000305" key="3"/>
<sequence length="156" mass="17977">MRGDKETTNWLNKSLMKQARQKKLSIIAVGVLSTVAVTVGYLLYLYRGQRNPNIRDVKPKSKCYVLTQDLFDKIENWQEELSKDSVMLVLPEVAHLGNHLKLQLSSIEHKIVIFNNSSAVWSAVRHLKKYELVISRDKTSDMPVDLRRYVGQISHI</sequence>
<proteinExistence type="inferred from homology"/>
<keyword id="KW-0472">Membrane</keyword>
<keyword id="KW-0576">Peroxisome</keyword>
<keyword id="KW-0962">Peroxisome biogenesis</keyword>
<keyword id="KW-1185">Reference proteome</keyword>
<keyword id="KW-0812">Transmembrane</keyword>
<keyword id="KW-1133">Transmembrane helix</keyword>
<gene>
    <name type="primary">PEX22</name>
    <name type="ordered locus">KLLA0F00308g</name>
</gene>
<comment type="function">
    <text evidence="1">Involved in peroxisome biogenesis.</text>
</comment>
<comment type="subcellular location">
    <subcellularLocation>
        <location evidence="1">Peroxisome membrane</location>
        <topology evidence="1">Single-pass membrane protein</topology>
    </subcellularLocation>
</comment>
<comment type="similarity">
    <text evidence="3">Belongs to the peroxin-22 family.</text>
</comment>
<name>PEX22_KLULA</name>